<sequence>MDTRAKDPASRPRLLVAASGTGGHIFPALAVAEQLPDWQIEWLGVPDRMEGKLVRERYPLHRVVMSGWQGSPLHRLQALAQLARATLQVRRLLMSGRFDIVLTTGGYIAAPAILAARSLGVPVLLHESNWIPGKVTRWLGRFCQVVALGMAETAEHLPGVAAQVVGTPVRAEFYTPQPFPADLPIPDGDPLIVVMGGSQGARGLNRMVATCAPAWLEAGAWIVHLTGGSEAQDPEARIPSHPRYRPFPFRRDVAALLQRANFAISRAGAMSLAELLTTATPAILIPYPFAAEDHQYQNALAFVGRGGGVVMRESEENLDLLRQTVLTWLAQPQVVAQMAARLQAAAPPNASKVLARLLQEIRQSSAR</sequence>
<protein>
    <recommendedName>
        <fullName evidence="1">UDP-N-acetylglucosamine--N-acetylmuramyl-(pentapeptide) pyrophosphoryl-undecaprenol N-acetylglucosamine transferase</fullName>
        <ecNumber evidence="1">2.4.1.227</ecNumber>
    </recommendedName>
    <alternativeName>
        <fullName evidence="1">Undecaprenyl-PP-MurNAc-pentapeptide-UDPGlcNAc GlcNAc transferase</fullName>
    </alternativeName>
</protein>
<comment type="function">
    <text evidence="1">Cell wall formation. Catalyzes the transfer of a GlcNAc subunit on undecaprenyl-pyrophosphoryl-MurNAc-pentapeptide (lipid intermediate I) to form undecaprenyl-pyrophosphoryl-MurNAc-(pentapeptide)GlcNAc (lipid intermediate II).</text>
</comment>
<comment type="catalytic activity">
    <reaction evidence="1">
        <text>di-trans,octa-cis-undecaprenyl diphospho-N-acetyl-alpha-D-muramoyl-L-alanyl-D-glutamyl-meso-2,6-diaminopimeloyl-D-alanyl-D-alanine + UDP-N-acetyl-alpha-D-glucosamine = di-trans,octa-cis-undecaprenyl diphospho-[N-acetyl-alpha-D-glucosaminyl-(1-&gt;4)]-N-acetyl-alpha-D-muramoyl-L-alanyl-D-glutamyl-meso-2,6-diaminopimeloyl-D-alanyl-D-alanine + UDP + H(+)</text>
        <dbReference type="Rhea" id="RHEA:31227"/>
        <dbReference type="ChEBI" id="CHEBI:15378"/>
        <dbReference type="ChEBI" id="CHEBI:57705"/>
        <dbReference type="ChEBI" id="CHEBI:58223"/>
        <dbReference type="ChEBI" id="CHEBI:61387"/>
        <dbReference type="ChEBI" id="CHEBI:61388"/>
        <dbReference type="EC" id="2.4.1.227"/>
    </reaction>
</comment>
<comment type="pathway">
    <text evidence="1">Cell wall biogenesis; peptidoglycan biosynthesis.</text>
</comment>
<comment type="subcellular location">
    <subcellularLocation>
        <location evidence="1">Cell inner membrane</location>
        <topology evidence="1">Peripheral membrane protein</topology>
        <orientation evidence="1">Cytoplasmic side</orientation>
    </subcellularLocation>
</comment>
<comment type="similarity">
    <text evidence="1">Belongs to the glycosyltransferase 28 family. MurG subfamily.</text>
</comment>
<organism>
    <name type="scientific">Synechococcus sp. (strain JA-2-3B'a(2-13))</name>
    <name type="common">Cyanobacteria bacterium Yellowstone B-Prime</name>
    <dbReference type="NCBI Taxonomy" id="321332"/>
    <lineage>
        <taxon>Bacteria</taxon>
        <taxon>Bacillati</taxon>
        <taxon>Cyanobacteriota</taxon>
        <taxon>Cyanophyceae</taxon>
        <taxon>Synechococcales</taxon>
        <taxon>Synechococcaceae</taxon>
        <taxon>Synechococcus</taxon>
    </lineage>
</organism>
<accession>Q2JJR4</accession>
<gene>
    <name evidence="1" type="primary">murG</name>
    <name type="ordered locus">CYB_2152</name>
</gene>
<dbReference type="EC" id="2.4.1.227" evidence="1"/>
<dbReference type="EMBL" id="CP000240">
    <property type="protein sequence ID" value="ABD03098.1"/>
    <property type="molecule type" value="Genomic_DNA"/>
</dbReference>
<dbReference type="RefSeq" id="WP_011433733.1">
    <property type="nucleotide sequence ID" value="NC_007776.1"/>
</dbReference>
<dbReference type="SMR" id="Q2JJR4"/>
<dbReference type="STRING" id="321332.CYB_2152"/>
<dbReference type="CAZy" id="GT28">
    <property type="family name" value="Glycosyltransferase Family 28"/>
</dbReference>
<dbReference type="KEGG" id="cyb:CYB_2152"/>
<dbReference type="eggNOG" id="COG0707">
    <property type="taxonomic scope" value="Bacteria"/>
</dbReference>
<dbReference type="HOGENOM" id="CLU_037404_2_1_3"/>
<dbReference type="OrthoDB" id="9808936at2"/>
<dbReference type="UniPathway" id="UPA00219"/>
<dbReference type="Proteomes" id="UP000001938">
    <property type="component" value="Chromosome"/>
</dbReference>
<dbReference type="GO" id="GO:0005886">
    <property type="term" value="C:plasma membrane"/>
    <property type="evidence" value="ECO:0007669"/>
    <property type="project" value="UniProtKB-SubCell"/>
</dbReference>
<dbReference type="GO" id="GO:0051991">
    <property type="term" value="F:UDP-N-acetyl-D-glucosamine:N-acetylmuramoyl-L-alanyl-D-glutamyl-meso-2,6-diaminopimelyl-D-alanyl-D-alanine-diphosphoundecaprenol 4-beta-N-acetylglucosaminlytransferase activity"/>
    <property type="evidence" value="ECO:0007669"/>
    <property type="project" value="RHEA"/>
</dbReference>
<dbReference type="GO" id="GO:0050511">
    <property type="term" value="F:undecaprenyldiphospho-muramoylpentapeptide beta-N-acetylglucosaminyltransferase activity"/>
    <property type="evidence" value="ECO:0007669"/>
    <property type="project" value="UniProtKB-UniRule"/>
</dbReference>
<dbReference type="GO" id="GO:0005975">
    <property type="term" value="P:carbohydrate metabolic process"/>
    <property type="evidence" value="ECO:0007669"/>
    <property type="project" value="InterPro"/>
</dbReference>
<dbReference type="GO" id="GO:0051301">
    <property type="term" value="P:cell division"/>
    <property type="evidence" value="ECO:0007669"/>
    <property type="project" value="UniProtKB-KW"/>
</dbReference>
<dbReference type="GO" id="GO:0071555">
    <property type="term" value="P:cell wall organization"/>
    <property type="evidence" value="ECO:0007669"/>
    <property type="project" value="UniProtKB-KW"/>
</dbReference>
<dbReference type="GO" id="GO:0030259">
    <property type="term" value="P:lipid glycosylation"/>
    <property type="evidence" value="ECO:0007669"/>
    <property type="project" value="UniProtKB-UniRule"/>
</dbReference>
<dbReference type="GO" id="GO:0009252">
    <property type="term" value="P:peptidoglycan biosynthetic process"/>
    <property type="evidence" value="ECO:0007669"/>
    <property type="project" value="UniProtKB-UniRule"/>
</dbReference>
<dbReference type="GO" id="GO:0008360">
    <property type="term" value="P:regulation of cell shape"/>
    <property type="evidence" value="ECO:0007669"/>
    <property type="project" value="UniProtKB-KW"/>
</dbReference>
<dbReference type="CDD" id="cd03785">
    <property type="entry name" value="GT28_MurG"/>
    <property type="match status" value="1"/>
</dbReference>
<dbReference type="Gene3D" id="3.40.50.2000">
    <property type="entry name" value="Glycogen Phosphorylase B"/>
    <property type="match status" value="2"/>
</dbReference>
<dbReference type="HAMAP" id="MF_00033">
    <property type="entry name" value="MurG"/>
    <property type="match status" value="1"/>
</dbReference>
<dbReference type="InterPro" id="IPR006009">
    <property type="entry name" value="GlcNAc_MurG"/>
</dbReference>
<dbReference type="InterPro" id="IPR007235">
    <property type="entry name" value="Glyco_trans_28_C"/>
</dbReference>
<dbReference type="InterPro" id="IPR004276">
    <property type="entry name" value="GlycoTrans_28_N"/>
</dbReference>
<dbReference type="NCBIfam" id="TIGR01133">
    <property type="entry name" value="murG"/>
    <property type="match status" value="1"/>
</dbReference>
<dbReference type="PANTHER" id="PTHR21015:SF22">
    <property type="entry name" value="GLYCOSYLTRANSFERASE"/>
    <property type="match status" value="1"/>
</dbReference>
<dbReference type="PANTHER" id="PTHR21015">
    <property type="entry name" value="UDP-N-ACETYLGLUCOSAMINE--N-ACETYLMURAMYL-(PENTAPEPTIDE) PYROPHOSPHORYL-UNDECAPRENOL N-ACETYLGLUCOSAMINE TRANSFERASE 1"/>
    <property type="match status" value="1"/>
</dbReference>
<dbReference type="Pfam" id="PF04101">
    <property type="entry name" value="Glyco_tran_28_C"/>
    <property type="match status" value="1"/>
</dbReference>
<dbReference type="Pfam" id="PF03033">
    <property type="entry name" value="Glyco_transf_28"/>
    <property type="match status" value="1"/>
</dbReference>
<dbReference type="SUPFAM" id="SSF53756">
    <property type="entry name" value="UDP-Glycosyltransferase/glycogen phosphorylase"/>
    <property type="match status" value="1"/>
</dbReference>
<name>MURG_SYNJB</name>
<reference key="1">
    <citation type="journal article" date="2007" name="ISME J.">
        <title>Population level functional diversity in a microbial community revealed by comparative genomic and metagenomic analyses.</title>
        <authorList>
            <person name="Bhaya D."/>
            <person name="Grossman A.R."/>
            <person name="Steunou A.-S."/>
            <person name="Khuri N."/>
            <person name="Cohan F.M."/>
            <person name="Hamamura N."/>
            <person name="Melendrez M.C."/>
            <person name="Bateson M.M."/>
            <person name="Ward D.M."/>
            <person name="Heidelberg J.F."/>
        </authorList>
    </citation>
    <scope>NUCLEOTIDE SEQUENCE [LARGE SCALE GENOMIC DNA]</scope>
    <source>
        <strain>JA-2-3B'a(2-13)</strain>
    </source>
</reference>
<keyword id="KW-0131">Cell cycle</keyword>
<keyword id="KW-0132">Cell division</keyword>
<keyword id="KW-0997">Cell inner membrane</keyword>
<keyword id="KW-1003">Cell membrane</keyword>
<keyword id="KW-0133">Cell shape</keyword>
<keyword id="KW-0961">Cell wall biogenesis/degradation</keyword>
<keyword id="KW-0328">Glycosyltransferase</keyword>
<keyword id="KW-0472">Membrane</keyword>
<keyword id="KW-0573">Peptidoglycan synthesis</keyword>
<keyword id="KW-1185">Reference proteome</keyword>
<keyword id="KW-0808">Transferase</keyword>
<proteinExistence type="inferred from homology"/>
<evidence type="ECO:0000255" key="1">
    <source>
        <dbReference type="HAMAP-Rule" id="MF_00033"/>
    </source>
</evidence>
<feature type="chain" id="PRO_1000002696" description="UDP-N-acetylglucosamine--N-acetylmuramyl-(pentapeptide) pyrophosphoryl-undecaprenol N-acetylglucosamine transferase">
    <location>
        <begin position="1"/>
        <end position="367"/>
    </location>
</feature>
<feature type="binding site" evidence="1">
    <location>
        <begin position="21"/>
        <end position="23"/>
    </location>
    <ligand>
        <name>UDP-N-acetyl-alpha-D-glucosamine</name>
        <dbReference type="ChEBI" id="CHEBI:57705"/>
    </ligand>
</feature>
<feature type="binding site" evidence="1">
    <location>
        <position position="129"/>
    </location>
    <ligand>
        <name>UDP-N-acetyl-alpha-D-glucosamine</name>
        <dbReference type="ChEBI" id="CHEBI:57705"/>
    </ligand>
</feature>
<feature type="binding site" evidence="1">
    <location>
        <position position="170"/>
    </location>
    <ligand>
        <name>UDP-N-acetyl-alpha-D-glucosamine</name>
        <dbReference type="ChEBI" id="CHEBI:57705"/>
    </ligand>
</feature>
<feature type="binding site" evidence="1">
    <location>
        <position position="198"/>
    </location>
    <ligand>
        <name>UDP-N-acetyl-alpha-D-glucosamine</name>
        <dbReference type="ChEBI" id="CHEBI:57705"/>
    </ligand>
</feature>
<feature type="binding site" evidence="1">
    <location>
        <position position="295"/>
    </location>
    <ligand>
        <name>UDP-N-acetyl-alpha-D-glucosamine</name>
        <dbReference type="ChEBI" id="CHEBI:57705"/>
    </ligand>
</feature>